<gene>
    <name evidence="2" type="primary">SASH3</name>
</gene>
<dbReference type="EMBL" id="AAFC03003066">
    <property type="status" value="NOT_ANNOTATED_CDS"/>
    <property type="molecule type" value="Genomic_DNA"/>
</dbReference>
<dbReference type="EMBL" id="BC126545">
    <property type="protein sequence ID" value="AAI26546.1"/>
    <property type="status" value="ALT_SEQ"/>
    <property type="molecule type" value="mRNA"/>
</dbReference>
<dbReference type="RefSeq" id="NP_001071466.1">
    <property type="nucleotide sequence ID" value="NM_001077998.2"/>
</dbReference>
<dbReference type="RefSeq" id="XP_010819700.1">
    <property type="nucleotide sequence ID" value="XM_010821398.4"/>
</dbReference>
<dbReference type="SMR" id="A0JN71"/>
<dbReference type="FunCoup" id="A0JN71">
    <property type="interactions" value="698"/>
</dbReference>
<dbReference type="STRING" id="9913.ENSBTAP00000002645"/>
<dbReference type="PaxDb" id="9913-ENSBTAP00000002645"/>
<dbReference type="Ensembl" id="ENSBTAT00000002645.6">
    <property type="protein sequence ID" value="ENSBTAP00000002645.4"/>
    <property type="gene ID" value="ENSBTAG00000002041.6"/>
</dbReference>
<dbReference type="GeneID" id="534137"/>
<dbReference type="KEGG" id="bta:534137"/>
<dbReference type="CTD" id="54440"/>
<dbReference type="VEuPathDB" id="HostDB:ENSBTAG00000002041"/>
<dbReference type="VGNC" id="VGNC:34294">
    <property type="gene designation" value="SASH3"/>
</dbReference>
<dbReference type="eggNOG" id="KOG4384">
    <property type="taxonomic scope" value="Eukaryota"/>
</dbReference>
<dbReference type="GeneTree" id="ENSGT00940000160111"/>
<dbReference type="HOGENOM" id="CLU_027875_0_0_1"/>
<dbReference type="InParanoid" id="A0JN71"/>
<dbReference type="OMA" id="DKEPTQK"/>
<dbReference type="OrthoDB" id="10047268at2759"/>
<dbReference type="TreeFam" id="TF350709"/>
<dbReference type="Proteomes" id="UP000009136">
    <property type="component" value="Chromosome X"/>
</dbReference>
<dbReference type="Bgee" id="ENSBTAG00000002041">
    <property type="expression patterns" value="Expressed in thymus and 99 other cell types or tissues"/>
</dbReference>
<dbReference type="GO" id="GO:0005737">
    <property type="term" value="C:cytoplasm"/>
    <property type="evidence" value="ECO:0000318"/>
    <property type="project" value="GO_Central"/>
</dbReference>
<dbReference type="GO" id="GO:0005634">
    <property type="term" value="C:nucleus"/>
    <property type="evidence" value="ECO:0000318"/>
    <property type="project" value="GO_Central"/>
</dbReference>
<dbReference type="GO" id="GO:0001782">
    <property type="term" value="P:B cell homeostasis"/>
    <property type="evidence" value="ECO:0007669"/>
    <property type="project" value="Ensembl"/>
</dbReference>
<dbReference type="GO" id="GO:0042100">
    <property type="term" value="P:B cell proliferation"/>
    <property type="evidence" value="ECO:0007669"/>
    <property type="project" value="Ensembl"/>
</dbReference>
<dbReference type="GO" id="GO:0043367">
    <property type="term" value="P:CD4-positive, alpha-beta T cell differentiation"/>
    <property type="evidence" value="ECO:0007669"/>
    <property type="project" value="Ensembl"/>
</dbReference>
<dbReference type="GO" id="GO:0048873">
    <property type="term" value="P:homeostasis of number of cells within a tissue"/>
    <property type="evidence" value="ECO:0007669"/>
    <property type="project" value="Ensembl"/>
</dbReference>
<dbReference type="GO" id="GO:0002821">
    <property type="term" value="P:positive regulation of adaptive immune response"/>
    <property type="evidence" value="ECO:0000318"/>
    <property type="project" value="GO_Central"/>
</dbReference>
<dbReference type="GO" id="GO:0030890">
    <property type="term" value="P:positive regulation of B cell proliferation"/>
    <property type="evidence" value="ECO:0000318"/>
    <property type="project" value="GO_Central"/>
</dbReference>
<dbReference type="GO" id="GO:0043372">
    <property type="term" value="P:positive regulation of CD4-positive, alpha-beta T cell differentiation"/>
    <property type="evidence" value="ECO:0007669"/>
    <property type="project" value="Ensembl"/>
</dbReference>
<dbReference type="GO" id="GO:0002639">
    <property type="term" value="P:positive regulation of immunoglobulin production"/>
    <property type="evidence" value="ECO:0000318"/>
    <property type="project" value="GO_Central"/>
</dbReference>
<dbReference type="GO" id="GO:0032733">
    <property type="term" value="P:positive regulation of interleukin-10 production"/>
    <property type="evidence" value="ECO:0007669"/>
    <property type="project" value="Ensembl"/>
</dbReference>
<dbReference type="GO" id="GO:0032743">
    <property type="term" value="P:positive regulation of interleukin-2 production"/>
    <property type="evidence" value="ECO:0007669"/>
    <property type="project" value="Ensembl"/>
</dbReference>
<dbReference type="GO" id="GO:0032753">
    <property type="term" value="P:positive regulation of interleukin-4 production"/>
    <property type="evidence" value="ECO:0007669"/>
    <property type="project" value="Ensembl"/>
</dbReference>
<dbReference type="GO" id="GO:0046622">
    <property type="term" value="P:positive regulation of organ growth"/>
    <property type="evidence" value="ECO:0007669"/>
    <property type="project" value="Ensembl"/>
</dbReference>
<dbReference type="GO" id="GO:0002726">
    <property type="term" value="P:positive regulation of T cell cytokine production"/>
    <property type="evidence" value="ECO:0007669"/>
    <property type="project" value="Ensembl"/>
</dbReference>
<dbReference type="GO" id="GO:0042102">
    <property type="term" value="P:positive regulation of T cell proliferation"/>
    <property type="evidence" value="ECO:0007669"/>
    <property type="project" value="Ensembl"/>
</dbReference>
<dbReference type="GO" id="GO:0032760">
    <property type="term" value="P:positive regulation of tumor necrosis factor production"/>
    <property type="evidence" value="ECO:0007669"/>
    <property type="project" value="Ensembl"/>
</dbReference>
<dbReference type="GO" id="GO:0032729">
    <property type="term" value="P:positive regulation of type II interferon production"/>
    <property type="evidence" value="ECO:0007669"/>
    <property type="project" value="Ensembl"/>
</dbReference>
<dbReference type="GO" id="GO:1902531">
    <property type="term" value="P:regulation of intracellular signal transduction"/>
    <property type="evidence" value="ECO:0000318"/>
    <property type="project" value="GO_Central"/>
</dbReference>
<dbReference type="GO" id="GO:0042098">
    <property type="term" value="P:T cell proliferation"/>
    <property type="evidence" value="ECO:0007669"/>
    <property type="project" value="Ensembl"/>
</dbReference>
<dbReference type="CDD" id="cd11968">
    <property type="entry name" value="SH3_SASH3"/>
    <property type="match status" value="1"/>
</dbReference>
<dbReference type="FunFam" id="1.10.150.50:FF:000024">
    <property type="entry name" value="Putative sam and sh3 domain-containing protein 1"/>
    <property type="match status" value="1"/>
</dbReference>
<dbReference type="FunFam" id="2.30.30.40:FF:000021">
    <property type="entry name" value="Putative sam and sh3 domain-containing protein 1"/>
    <property type="match status" value="1"/>
</dbReference>
<dbReference type="Gene3D" id="2.30.30.40">
    <property type="entry name" value="SH3 Domains"/>
    <property type="match status" value="1"/>
</dbReference>
<dbReference type="Gene3D" id="1.10.150.50">
    <property type="entry name" value="Transcription Factor, Ets-1"/>
    <property type="match status" value="1"/>
</dbReference>
<dbReference type="InterPro" id="IPR001660">
    <property type="entry name" value="SAM"/>
</dbReference>
<dbReference type="InterPro" id="IPR051725">
    <property type="entry name" value="SAM-SH3_domain_protein"/>
</dbReference>
<dbReference type="InterPro" id="IPR013761">
    <property type="entry name" value="SAM/pointed_sf"/>
</dbReference>
<dbReference type="InterPro" id="IPR035721">
    <property type="entry name" value="SASH3_SH3"/>
</dbReference>
<dbReference type="InterPro" id="IPR036028">
    <property type="entry name" value="SH3-like_dom_sf"/>
</dbReference>
<dbReference type="InterPro" id="IPR001452">
    <property type="entry name" value="SH3_domain"/>
</dbReference>
<dbReference type="InterPro" id="IPR021090">
    <property type="entry name" value="SPIDER"/>
</dbReference>
<dbReference type="PANTHER" id="PTHR12301:SF5">
    <property type="entry name" value="SAM AND SH3 DOMAIN-CONTAINING PROTEIN 3"/>
    <property type="match status" value="1"/>
</dbReference>
<dbReference type="PANTHER" id="PTHR12301">
    <property type="entry name" value="SAM-DOMAIN, SH3 AND NUCLEAR LOCALIZATION SIGNALS PROTEIN RELATED"/>
    <property type="match status" value="1"/>
</dbReference>
<dbReference type="Pfam" id="PF00536">
    <property type="entry name" value="SAM_1"/>
    <property type="match status" value="1"/>
</dbReference>
<dbReference type="Pfam" id="PF07653">
    <property type="entry name" value="SH3_2"/>
    <property type="match status" value="1"/>
</dbReference>
<dbReference type="Pfam" id="PF12485">
    <property type="entry name" value="SPIDER"/>
    <property type="match status" value="1"/>
</dbReference>
<dbReference type="SMART" id="SM00454">
    <property type="entry name" value="SAM"/>
    <property type="match status" value="1"/>
</dbReference>
<dbReference type="SMART" id="SM00326">
    <property type="entry name" value="SH3"/>
    <property type="match status" value="1"/>
</dbReference>
<dbReference type="SUPFAM" id="SSF47769">
    <property type="entry name" value="SAM/Pointed domain"/>
    <property type="match status" value="1"/>
</dbReference>
<dbReference type="SUPFAM" id="SSF50044">
    <property type="entry name" value="SH3-domain"/>
    <property type="match status" value="1"/>
</dbReference>
<dbReference type="PROSITE" id="PS50105">
    <property type="entry name" value="SAM_DOMAIN"/>
    <property type="match status" value="1"/>
</dbReference>
<dbReference type="PROSITE" id="PS50002">
    <property type="entry name" value="SH3"/>
    <property type="match status" value="1"/>
</dbReference>
<proteinExistence type="evidence at transcript level"/>
<feature type="chain" id="PRO_0000331222" description="SAM and SH3 domain-containing protein 3">
    <location>
        <begin position="1"/>
        <end position="380"/>
    </location>
</feature>
<feature type="domain" description="SH3" evidence="5">
    <location>
        <begin position="173"/>
        <end position="234"/>
    </location>
</feature>
<feature type="domain" description="SAM" evidence="4">
    <location>
        <begin position="252"/>
        <end position="316"/>
    </location>
</feature>
<feature type="region of interest" description="Disordered" evidence="6">
    <location>
        <begin position="1"/>
        <end position="174"/>
    </location>
</feature>
<feature type="region of interest" description="Disordered" evidence="6">
    <location>
        <begin position="318"/>
        <end position="380"/>
    </location>
</feature>
<feature type="compositionally biased region" description="Low complexity" evidence="6">
    <location>
        <begin position="22"/>
        <end position="41"/>
    </location>
</feature>
<feature type="compositionally biased region" description="Basic residues" evidence="6">
    <location>
        <begin position="84"/>
        <end position="93"/>
    </location>
</feature>
<feature type="compositionally biased region" description="Polar residues" evidence="6">
    <location>
        <begin position="143"/>
        <end position="158"/>
    </location>
</feature>
<feature type="compositionally biased region" description="Acidic residues" evidence="6">
    <location>
        <begin position="318"/>
        <end position="327"/>
    </location>
</feature>
<feature type="modified residue" description="Phosphoserine" evidence="1">
    <location>
        <position position="27"/>
    </location>
</feature>
<feature type="modified residue" description="Phosphoserine" evidence="1">
    <location>
        <position position="34"/>
    </location>
</feature>
<feature type="modified residue" description="Phosphoserine" evidence="1">
    <location>
        <position position="42"/>
    </location>
</feature>
<feature type="modified residue" description="Phosphothreonine" evidence="1">
    <location>
        <position position="61"/>
    </location>
</feature>
<feature type="modified residue" description="Phosphoserine" evidence="1">
    <location>
        <position position="97"/>
    </location>
</feature>
<feature type="modified residue" description="Phosphothreonine" evidence="1">
    <location>
        <position position="103"/>
    </location>
</feature>
<feature type="modified residue" description="Phosphoserine" evidence="1">
    <location>
        <position position="110"/>
    </location>
</feature>
<feature type="modified residue" description="Phosphothreonine" evidence="1">
    <location>
        <position position="112"/>
    </location>
</feature>
<feature type="modified residue" description="Phosphoserine" evidence="1">
    <location>
        <position position="113"/>
    </location>
</feature>
<feature type="modified residue" description="Phosphoserine" evidence="1">
    <location>
        <position position="120"/>
    </location>
</feature>
<feature type="modified residue" description="Phosphothreonine" evidence="1">
    <location>
        <position position="318"/>
    </location>
</feature>
<feature type="modified residue" description="Phosphoserine" evidence="1">
    <location>
        <position position="320"/>
    </location>
</feature>
<feature type="sequence conflict" description="In Ref. 1; AAFC03003066." evidence="7" ref="1">
    <original>T</original>
    <variation>S</variation>
    <location>
        <position position="318"/>
    </location>
</feature>
<reference key="1">
    <citation type="journal article" date="2009" name="Science">
        <title>The genome sequence of taurine cattle: a window to ruminant biology and evolution.</title>
        <authorList>
            <consortium name="The bovine genome sequencing and analysis consortium"/>
        </authorList>
    </citation>
    <scope>NUCLEOTIDE SEQUENCE [LARGE SCALE GENOMIC DNA]</scope>
    <source>
        <strain>Hereford</strain>
    </source>
</reference>
<reference evidence="7 8" key="2">
    <citation type="submission" date="2006-10" db="EMBL/GenBank/DDBJ databases">
        <authorList>
            <consortium name="NIH - Mammalian Gene Collection (MGC) project"/>
        </authorList>
    </citation>
    <scope>NUCLEOTIDE SEQUENCE [LARGE SCALE MRNA]</scope>
    <source>
        <strain evidence="8">Hereford</strain>
        <tissue evidence="8">Thymus</tissue>
    </source>
</reference>
<sequence length="380" mass="41566">MLRRKPSNASEKEPTQKKKLSLQRSSSFKDFAKSKPSSPVVSEKEFNLDDNIPEDESSVPTPEDAEKSGKKLGKKWRAVISRTMNRKTGKKMVKALSEEMGDTLEEGSASPTSPDCSLDSPGPEKMALAFSEQEERELPALSRQASTGSELCSPSPGSGNLGEESTAPQYTGPFCGRARVHTDFTPSPYDRDSLKLQKGDVIQIVEKPPVGTWLGLLNGRMGSFKFIYVDVLPEEAVGPARPSRRQSKGKRPKPKTLHELLERIGLEEHTSTLLLNGYQTLEDFKELRETHLNELNIMDPQHRAKLLTAAELLLDYDTGSEEAEEGTESGQEPAVSTVADPKVDIPRDSGCFEGSESGRDEAELAGTEEQLHGLSLSGAP</sequence>
<accession>A0JN71</accession>
<organism>
    <name type="scientific">Bos taurus</name>
    <name type="common">Bovine</name>
    <dbReference type="NCBI Taxonomy" id="9913"/>
    <lineage>
        <taxon>Eukaryota</taxon>
        <taxon>Metazoa</taxon>
        <taxon>Chordata</taxon>
        <taxon>Craniata</taxon>
        <taxon>Vertebrata</taxon>
        <taxon>Euteleostomi</taxon>
        <taxon>Mammalia</taxon>
        <taxon>Eutheria</taxon>
        <taxon>Laurasiatheria</taxon>
        <taxon>Artiodactyla</taxon>
        <taxon>Ruminantia</taxon>
        <taxon>Pecora</taxon>
        <taxon>Bovidae</taxon>
        <taxon>Bovinae</taxon>
        <taxon>Bos</taxon>
    </lineage>
</organism>
<protein>
    <recommendedName>
        <fullName>SAM and SH3 domain-containing protein 3</fullName>
    </recommendedName>
</protein>
<name>SASH3_BOVIN</name>
<comment type="function">
    <text evidence="2">May function as a signaling adapter protein in lymphocytes.</text>
</comment>
<comment type="similarity">
    <text evidence="3">Belongs to the SASH family.</text>
</comment>
<comment type="sequence caution" evidence="7">
    <conflict type="erroneous termination">
        <sequence resource="EMBL-CDS" id="AAI26546"/>
    </conflict>
    <text>Truncated C-terminus.</text>
</comment>
<evidence type="ECO:0000250" key="1">
    <source>
        <dbReference type="UniProtKB" id="O75995"/>
    </source>
</evidence>
<evidence type="ECO:0000250" key="2">
    <source>
        <dbReference type="UniProtKB" id="Q8K352"/>
    </source>
</evidence>
<evidence type="ECO:0000255" key="3"/>
<evidence type="ECO:0000255" key="4">
    <source>
        <dbReference type="PROSITE-ProRule" id="PRU00184"/>
    </source>
</evidence>
<evidence type="ECO:0000255" key="5">
    <source>
        <dbReference type="PROSITE-ProRule" id="PRU00192"/>
    </source>
</evidence>
<evidence type="ECO:0000256" key="6">
    <source>
        <dbReference type="SAM" id="MobiDB-lite"/>
    </source>
</evidence>
<evidence type="ECO:0000305" key="7"/>
<evidence type="ECO:0000312" key="8">
    <source>
        <dbReference type="EMBL" id="AAI26546.1"/>
    </source>
</evidence>
<keyword id="KW-0597">Phosphoprotein</keyword>
<keyword id="KW-1185">Reference proteome</keyword>
<keyword id="KW-0728">SH3 domain</keyword>